<sequence>MGNKNVIQKMREKTPLIHCITNYVTINDCANILLAFGASPAMCEAYDEAYDFVSISSALYINLGTLTKEQETAAILASISAKNHNVPVVIDPVGCPAIKRKVEVINRIAEVGRIDIIKGNIGEIKFLAGMDSETRGVDSLDNGENALDACTQLAKKYNCIVAATGKKDFVSDGKRGSVIKNGTEMLTKVTGAGCMLGALCAATCASFEDKLVSTTAAILSMNIAGEKAYEKAQLPGSFRIALIDNIYMISDEEIWERGNVEWK</sequence>
<reference key="1">
    <citation type="journal article" date="2007" name="PLoS ONE">
        <title>Analysis of the neurotoxin complex genes in Clostridium botulinum A1-A4 and B1 strains: BoNT/A3, /Ba4 and /B1 clusters are located within plasmids.</title>
        <authorList>
            <person name="Smith T.J."/>
            <person name="Hill K.K."/>
            <person name="Foley B.T."/>
            <person name="Detter J.C."/>
            <person name="Munk A.C."/>
            <person name="Bruce D.C."/>
            <person name="Doggett N.A."/>
            <person name="Smith L.A."/>
            <person name="Marks J.D."/>
            <person name="Xie G."/>
            <person name="Brettin T.S."/>
        </authorList>
    </citation>
    <scope>NUCLEOTIDE SEQUENCE [LARGE SCALE GENOMIC DNA]</scope>
    <source>
        <strain>Loch Maree / Type A3</strain>
    </source>
</reference>
<proteinExistence type="inferred from homology"/>
<organism>
    <name type="scientific">Clostridium botulinum (strain Loch Maree / Type A3)</name>
    <dbReference type="NCBI Taxonomy" id="498214"/>
    <lineage>
        <taxon>Bacteria</taxon>
        <taxon>Bacillati</taxon>
        <taxon>Bacillota</taxon>
        <taxon>Clostridia</taxon>
        <taxon>Eubacteriales</taxon>
        <taxon>Clostridiaceae</taxon>
        <taxon>Clostridium</taxon>
    </lineage>
</organism>
<comment type="function">
    <text evidence="1">Catalyzes the phosphorylation of the hydroxyl group of 4-methyl-5-beta-hydroxyethylthiazole (THZ).</text>
</comment>
<comment type="catalytic activity">
    <reaction evidence="1">
        <text>5-(2-hydroxyethyl)-4-methylthiazole + ATP = 4-methyl-5-(2-phosphooxyethyl)-thiazole + ADP + H(+)</text>
        <dbReference type="Rhea" id="RHEA:24212"/>
        <dbReference type="ChEBI" id="CHEBI:15378"/>
        <dbReference type="ChEBI" id="CHEBI:17957"/>
        <dbReference type="ChEBI" id="CHEBI:30616"/>
        <dbReference type="ChEBI" id="CHEBI:58296"/>
        <dbReference type="ChEBI" id="CHEBI:456216"/>
        <dbReference type="EC" id="2.7.1.50"/>
    </reaction>
</comment>
<comment type="cofactor">
    <cofactor evidence="1">
        <name>Mg(2+)</name>
        <dbReference type="ChEBI" id="CHEBI:18420"/>
    </cofactor>
</comment>
<comment type="pathway">
    <text evidence="1">Cofactor biosynthesis; thiamine diphosphate biosynthesis; 4-methyl-5-(2-phosphoethyl)-thiazole from 5-(2-hydroxyethyl)-4-methylthiazole: step 1/1.</text>
</comment>
<comment type="similarity">
    <text evidence="1">Belongs to the Thz kinase family.</text>
</comment>
<accession>B1KV13</accession>
<dbReference type="EC" id="2.7.1.50" evidence="1"/>
<dbReference type="EMBL" id="CP000962">
    <property type="protein sequence ID" value="ACA55211.1"/>
    <property type="molecule type" value="Genomic_DNA"/>
</dbReference>
<dbReference type="RefSeq" id="WP_012343223.1">
    <property type="nucleotide sequence ID" value="NC_010520.1"/>
</dbReference>
<dbReference type="SMR" id="B1KV13"/>
<dbReference type="KEGG" id="cbl:CLK_3653"/>
<dbReference type="HOGENOM" id="CLU_019943_0_0_9"/>
<dbReference type="UniPathway" id="UPA00060">
    <property type="reaction ID" value="UER00139"/>
</dbReference>
<dbReference type="GO" id="GO:0005524">
    <property type="term" value="F:ATP binding"/>
    <property type="evidence" value="ECO:0007669"/>
    <property type="project" value="UniProtKB-UniRule"/>
</dbReference>
<dbReference type="GO" id="GO:0004417">
    <property type="term" value="F:hydroxyethylthiazole kinase activity"/>
    <property type="evidence" value="ECO:0007669"/>
    <property type="project" value="UniProtKB-UniRule"/>
</dbReference>
<dbReference type="GO" id="GO:0000287">
    <property type="term" value="F:magnesium ion binding"/>
    <property type="evidence" value="ECO:0007669"/>
    <property type="project" value="UniProtKB-UniRule"/>
</dbReference>
<dbReference type="GO" id="GO:0009228">
    <property type="term" value="P:thiamine biosynthetic process"/>
    <property type="evidence" value="ECO:0007669"/>
    <property type="project" value="UniProtKB-KW"/>
</dbReference>
<dbReference type="GO" id="GO:0009229">
    <property type="term" value="P:thiamine diphosphate biosynthetic process"/>
    <property type="evidence" value="ECO:0007669"/>
    <property type="project" value="UniProtKB-UniRule"/>
</dbReference>
<dbReference type="CDD" id="cd01170">
    <property type="entry name" value="THZ_kinase"/>
    <property type="match status" value="1"/>
</dbReference>
<dbReference type="Gene3D" id="3.40.1190.20">
    <property type="match status" value="1"/>
</dbReference>
<dbReference type="HAMAP" id="MF_00228">
    <property type="entry name" value="Thz_kinase"/>
    <property type="match status" value="1"/>
</dbReference>
<dbReference type="InterPro" id="IPR000417">
    <property type="entry name" value="Hyethyz_kinase"/>
</dbReference>
<dbReference type="InterPro" id="IPR029056">
    <property type="entry name" value="Ribokinase-like"/>
</dbReference>
<dbReference type="NCBIfam" id="NF006830">
    <property type="entry name" value="PRK09355.1"/>
    <property type="match status" value="1"/>
</dbReference>
<dbReference type="NCBIfam" id="TIGR00694">
    <property type="entry name" value="thiM"/>
    <property type="match status" value="1"/>
</dbReference>
<dbReference type="Pfam" id="PF02110">
    <property type="entry name" value="HK"/>
    <property type="match status" value="1"/>
</dbReference>
<dbReference type="PIRSF" id="PIRSF000513">
    <property type="entry name" value="Thz_kinase"/>
    <property type="match status" value="1"/>
</dbReference>
<dbReference type="PRINTS" id="PR01099">
    <property type="entry name" value="HYETHTZKNASE"/>
</dbReference>
<dbReference type="SUPFAM" id="SSF53613">
    <property type="entry name" value="Ribokinase-like"/>
    <property type="match status" value="1"/>
</dbReference>
<gene>
    <name evidence="1" type="primary">thiM2</name>
    <name type="ordered locus">CLK_3653</name>
</gene>
<keyword id="KW-0067">ATP-binding</keyword>
<keyword id="KW-0418">Kinase</keyword>
<keyword id="KW-0460">Magnesium</keyword>
<keyword id="KW-0479">Metal-binding</keyword>
<keyword id="KW-0547">Nucleotide-binding</keyword>
<keyword id="KW-0784">Thiamine biosynthesis</keyword>
<keyword id="KW-0808">Transferase</keyword>
<evidence type="ECO:0000255" key="1">
    <source>
        <dbReference type="HAMAP-Rule" id="MF_00228"/>
    </source>
</evidence>
<feature type="chain" id="PRO_1000100411" description="Hydroxyethylthiazole kinase 2">
    <location>
        <begin position="1"/>
        <end position="263"/>
    </location>
</feature>
<feature type="binding site" evidence="1">
    <location>
        <position position="42"/>
    </location>
    <ligand>
        <name>substrate</name>
    </ligand>
</feature>
<feature type="binding site" evidence="1">
    <location>
        <position position="118"/>
    </location>
    <ligand>
        <name>ATP</name>
        <dbReference type="ChEBI" id="CHEBI:30616"/>
    </ligand>
</feature>
<feature type="binding site" evidence="1">
    <location>
        <position position="164"/>
    </location>
    <ligand>
        <name>ATP</name>
        <dbReference type="ChEBI" id="CHEBI:30616"/>
    </ligand>
</feature>
<feature type="binding site" evidence="1">
    <location>
        <position position="191"/>
    </location>
    <ligand>
        <name>substrate</name>
    </ligand>
</feature>
<name>THIM2_CLOBM</name>
<protein>
    <recommendedName>
        <fullName evidence="1">Hydroxyethylthiazole kinase 2</fullName>
        <ecNumber evidence="1">2.7.1.50</ecNumber>
    </recommendedName>
    <alternativeName>
        <fullName evidence="1">4-methyl-5-beta-hydroxyethylthiazole kinase 2</fullName>
        <shortName evidence="1">TH kinase 2</shortName>
        <shortName evidence="1">Thz kinase 2</shortName>
    </alternativeName>
</protein>